<protein>
    <recommendedName>
        <fullName evidence="1">tRNA-specific 2-thiouridylase MnmA</fullName>
        <ecNumber evidence="1">2.8.1.13</ecNumber>
    </recommendedName>
</protein>
<accession>Q1BAU9</accession>
<organism>
    <name type="scientific">Mycobacterium sp. (strain MCS)</name>
    <dbReference type="NCBI Taxonomy" id="164756"/>
    <lineage>
        <taxon>Bacteria</taxon>
        <taxon>Bacillati</taxon>
        <taxon>Actinomycetota</taxon>
        <taxon>Actinomycetes</taxon>
        <taxon>Mycobacteriales</taxon>
        <taxon>Mycobacteriaceae</taxon>
        <taxon>Mycobacterium</taxon>
    </lineage>
</organism>
<comment type="function">
    <text evidence="1">Catalyzes the 2-thiolation of uridine at the wobble position (U34) of tRNA, leading to the formation of s(2)U34.</text>
</comment>
<comment type="catalytic activity">
    <reaction evidence="1">
        <text>S-sulfanyl-L-cysteinyl-[protein] + uridine(34) in tRNA + AH2 + ATP = 2-thiouridine(34) in tRNA + L-cysteinyl-[protein] + A + AMP + diphosphate + H(+)</text>
        <dbReference type="Rhea" id="RHEA:47032"/>
        <dbReference type="Rhea" id="RHEA-COMP:10131"/>
        <dbReference type="Rhea" id="RHEA-COMP:11726"/>
        <dbReference type="Rhea" id="RHEA-COMP:11727"/>
        <dbReference type="Rhea" id="RHEA-COMP:11728"/>
        <dbReference type="ChEBI" id="CHEBI:13193"/>
        <dbReference type="ChEBI" id="CHEBI:15378"/>
        <dbReference type="ChEBI" id="CHEBI:17499"/>
        <dbReference type="ChEBI" id="CHEBI:29950"/>
        <dbReference type="ChEBI" id="CHEBI:30616"/>
        <dbReference type="ChEBI" id="CHEBI:33019"/>
        <dbReference type="ChEBI" id="CHEBI:61963"/>
        <dbReference type="ChEBI" id="CHEBI:65315"/>
        <dbReference type="ChEBI" id="CHEBI:87170"/>
        <dbReference type="ChEBI" id="CHEBI:456215"/>
        <dbReference type="EC" id="2.8.1.13"/>
    </reaction>
</comment>
<comment type="subcellular location">
    <subcellularLocation>
        <location evidence="1">Cytoplasm</location>
    </subcellularLocation>
</comment>
<comment type="similarity">
    <text evidence="1">Belongs to the MnmA/TRMU family.</text>
</comment>
<name>MNMA_MYCSS</name>
<evidence type="ECO:0000255" key="1">
    <source>
        <dbReference type="HAMAP-Rule" id="MF_00144"/>
    </source>
</evidence>
<sequence length="359" mass="37494">MRVLVAMSGGVDSSVAAARMVDAGHDVVGVHLALSATPGTLRTGSRGCCSKEDAGDARRVADVLDIPFYVWDFADRFKEDVIDDFVASYERGETPNPCVRCNEKIKFSALAGRALALGFDALATGHYARLSDGRLRRAVDADKDQSYVLAVLTAQQLRHAVFPIGDTPKAQIRAEAAERGLAVADKPDSHDICFIPSGDTRAFLGARIGVRRGAVVDAGGTKLAEHEGVHGFTIGQRKGLGIAGPGPDGQPRYVTGIDAATGTVRVGGAEDLDVWRLTGERPVFTSGAAFGGPVECQVQVRAHGGLADAVASHDAGVLSVELRAPLRGVAAGQTMVIYRPDPEGDEVLASATISGADGR</sequence>
<proteinExistence type="inferred from homology"/>
<dbReference type="EC" id="2.8.1.13" evidence="1"/>
<dbReference type="EMBL" id="CP000384">
    <property type="protein sequence ID" value="ABG07985.1"/>
    <property type="molecule type" value="Genomic_DNA"/>
</dbReference>
<dbReference type="SMR" id="Q1BAU9"/>
<dbReference type="KEGG" id="mmc:Mmcs_1876"/>
<dbReference type="HOGENOM" id="CLU_035188_0_2_11"/>
<dbReference type="BioCyc" id="MSP164756:G1G6O-1918-MONOMER"/>
<dbReference type="GO" id="GO:0005737">
    <property type="term" value="C:cytoplasm"/>
    <property type="evidence" value="ECO:0007669"/>
    <property type="project" value="UniProtKB-SubCell"/>
</dbReference>
<dbReference type="GO" id="GO:0005524">
    <property type="term" value="F:ATP binding"/>
    <property type="evidence" value="ECO:0007669"/>
    <property type="project" value="UniProtKB-KW"/>
</dbReference>
<dbReference type="GO" id="GO:0000049">
    <property type="term" value="F:tRNA binding"/>
    <property type="evidence" value="ECO:0007669"/>
    <property type="project" value="UniProtKB-KW"/>
</dbReference>
<dbReference type="GO" id="GO:0103016">
    <property type="term" value="F:tRNA-uridine 2-sulfurtransferase activity"/>
    <property type="evidence" value="ECO:0007669"/>
    <property type="project" value="UniProtKB-EC"/>
</dbReference>
<dbReference type="GO" id="GO:0002143">
    <property type="term" value="P:tRNA wobble position uridine thiolation"/>
    <property type="evidence" value="ECO:0007669"/>
    <property type="project" value="TreeGrafter"/>
</dbReference>
<dbReference type="CDD" id="cd01998">
    <property type="entry name" value="MnmA_TRMU-like"/>
    <property type="match status" value="1"/>
</dbReference>
<dbReference type="FunFam" id="3.40.50.620:FF:000057">
    <property type="entry name" value="tRNA-specific 2-thiouridylase MnmA"/>
    <property type="match status" value="1"/>
</dbReference>
<dbReference type="Gene3D" id="2.30.30.280">
    <property type="entry name" value="Adenine nucleotide alpha hydrolases-like domains"/>
    <property type="match status" value="1"/>
</dbReference>
<dbReference type="Gene3D" id="3.40.50.620">
    <property type="entry name" value="HUPs"/>
    <property type="match status" value="1"/>
</dbReference>
<dbReference type="Gene3D" id="2.40.30.10">
    <property type="entry name" value="Translation factors"/>
    <property type="match status" value="1"/>
</dbReference>
<dbReference type="HAMAP" id="MF_00144">
    <property type="entry name" value="tRNA_thiouridyl_MnmA"/>
    <property type="match status" value="1"/>
</dbReference>
<dbReference type="InterPro" id="IPR004506">
    <property type="entry name" value="MnmA-like"/>
</dbReference>
<dbReference type="InterPro" id="IPR046885">
    <property type="entry name" value="MnmA-like_C"/>
</dbReference>
<dbReference type="InterPro" id="IPR046884">
    <property type="entry name" value="MnmA-like_central"/>
</dbReference>
<dbReference type="InterPro" id="IPR023382">
    <property type="entry name" value="MnmA-like_central_sf"/>
</dbReference>
<dbReference type="InterPro" id="IPR014729">
    <property type="entry name" value="Rossmann-like_a/b/a_fold"/>
</dbReference>
<dbReference type="NCBIfam" id="NF001138">
    <property type="entry name" value="PRK00143.1"/>
    <property type="match status" value="1"/>
</dbReference>
<dbReference type="NCBIfam" id="TIGR00420">
    <property type="entry name" value="trmU"/>
    <property type="match status" value="1"/>
</dbReference>
<dbReference type="PANTHER" id="PTHR11933:SF5">
    <property type="entry name" value="MITOCHONDRIAL TRNA-SPECIFIC 2-THIOURIDYLASE 1"/>
    <property type="match status" value="1"/>
</dbReference>
<dbReference type="PANTHER" id="PTHR11933">
    <property type="entry name" value="TRNA 5-METHYLAMINOMETHYL-2-THIOURIDYLATE -METHYLTRANSFERASE"/>
    <property type="match status" value="1"/>
</dbReference>
<dbReference type="Pfam" id="PF03054">
    <property type="entry name" value="tRNA_Me_trans"/>
    <property type="match status" value="1"/>
</dbReference>
<dbReference type="Pfam" id="PF20258">
    <property type="entry name" value="tRNA_Me_trans_C"/>
    <property type="match status" value="1"/>
</dbReference>
<dbReference type="Pfam" id="PF20259">
    <property type="entry name" value="tRNA_Me_trans_M"/>
    <property type="match status" value="1"/>
</dbReference>
<dbReference type="SUPFAM" id="SSF52402">
    <property type="entry name" value="Adenine nucleotide alpha hydrolases-like"/>
    <property type="match status" value="1"/>
</dbReference>
<feature type="chain" id="PRO_1000009543" description="tRNA-specific 2-thiouridylase MnmA">
    <location>
        <begin position="1"/>
        <end position="359"/>
    </location>
</feature>
<feature type="region of interest" description="Interaction with tRNA" evidence="1">
    <location>
        <begin position="143"/>
        <end position="145"/>
    </location>
</feature>
<feature type="active site" description="Nucleophile" evidence="1">
    <location>
        <position position="101"/>
    </location>
</feature>
<feature type="active site" description="Cysteine persulfide intermediate" evidence="1">
    <location>
        <position position="193"/>
    </location>
</feature>
<feature type="binding site" evidence="1">
    <location>
        <begin position="6"/>
        <end position="13"/>
    </location>
    <ligand>
        <name>ATP</name>
        <dbReference type="ChEBI" id="CHEBI:30616"/>
    </ligand>
</feature>
<feature type="binding site" evidence="1">
    <location>
        <position position="32"/>
    </location>
    <ligand>
        <name>ATP</name>
        <dbReference type="ChEBI" id="CHEBI:30616"/>
    </ligand>
</feature>
<feature type="binding site" evidence="1">
    <location>
        <position position="125"/>
    </location>
    <ligand>
        <name>ATP</name>
        <dbReference type="ChEBI" id="CHEBI:30616"/>
    </ligand>
</feature>
<feature type="site" description="Interaction with tRNA" evidence="1">
    <location>
        <position position="126"/>
    </location>
</feature>
<feature type="site" description="Interaction with tRNA" evidence="1">
    <location>
        <position position="333"/>
    </location>
</feature>
<feature type="disulfide bond" description="Alternate" evidence="1">
    <location>
        <begin position="101"/>
        <end position="193"/>
    </location>
</feature>
<gene>
    <name evidence="1" type="primary">mnmA</name>
    <name type="synonym">trmU</name>
    <name type="ordered locus">Mmcs_1876</name>
</gene>
<keyword id="KW-0067">ATP-binding</keyword>
<keyword id="KW-0963">Cytoplasm</keyword>
<keyword id="KW-1015">Disulfide bond</keyword>
<keyword id="KW-0547">Nucleotide-binding</keyword>
<keyword id="KW-0694">RNA-binding</keyword>
<keyword id="KW-0808">Transferase</keyword>
<keyword id="KW-0819">tRNA processing</keyword>
<keyword id="KW-0820">tRNA-binding</keyword>
<reference key="1">
    <citation type="submission" date="2006-06" db="EMBL/GenBank/DDBJ databases">
        <title>Complete sequence of chromosome of Mycobacterium sp. MCS.</title>
        <authorList>
            <consortium name="US DOE Joint Genome Institute"/>
            <person name="Copeland A."/>
            <person name="Lucas S."/>
            <person name="Lapidus A."/>
            <person name="Barry K."/>
            <person name="Detter J.C."/>
            <person name="Glavina del Rio T."/>
            <person name="Hammon N."/>
            <person name="Israni S."/>
            <person name="Dalin E."/>
            <person name="Tice H."/>
            <person name="Pitluck S."/>
            <person name="Martinez M."/>
            <person name="Schmutz J."/>
            <person name="Larimer F."/>
            <person name="Land M."/>
            <person name="Hauser L."/>
            <person name="Kyrpides N."/>
            <person name="Kim E."/>
            <person name="Miller C.D."/>
            <person name="Hughes J.E."/>
            <person name="Anderson A.J."/>
            <person name="Sims R.C."/>
            <person name="Richardson P."/>
        </authorList>
    </citation>
    <scope>NUCLEOTIDE SEQUENCE [LARGE SCALE GENOMIC DNA]</scope>
    <source>
        <strain>MCS</strain>
    </source>
</reference>